<evidence type="ECO:0000255" key="1">
    <source>
        <dbReference type="HAMAP-Rule" id="MF_00528"/>
    </source>
</evidence>
<organism>
    <name type="scientific">Clostridium botulinum (strain Alaska E43 / Type E3)</name>
    <dbReference type="NCBI Taxonomy" id="508767"/>
    <lineage>
        <taxon>Bacteria</taxon>
        <taxon>Bacillati</taxon>
        <taxon>Bacillota</taxon>
        <taxon>Clostridia</taxon>
        <taxon>Eubacteriales</taxon>
        <taxon>Clostridiaceae</taxon>
        <taxon>Clostridium</taxon>
    </lineage>
</organism>
<keyword id="KW-0963">Cytoplasm</keyword>
<keyword id="KW-0378">Hydrolase</keyword>
<keyword id="KW-0546">Nucleotide metabolism</keyword>
<protein>
    <recommendedName>
        <fullName evidence="1">dTTP/UTP pyrophosphatase</fullName>
        <shortName evidence="1">dTTPase/UTPase</shortName>
        <ecNumber evidence="1">3.6.1.9</ecNumber>
    </recommendedName>
    <alternativeName>
        <fullName evidence="1">Nucleoside triphosphate pyrophosphatase</fullName>
    </alternativeName>
    <alternativeName>
        <fullName evidence="1">Nucleotide pyrophosphatase</fullName>
        <shortName evidence="1">Nucleotide PPase</shortName>
    </alternativeName>
</protein>
<sequence>MKVILASASQRRQELLIRLCDEFDIMVSDFDEEKVVFKNSIDEYVQNIALGKAMDIKEKLKEDAIIISADTIVTLDDKILGKPKDEEDAFNMIKLLQGRSHKVYSGVVVINTKKDLILKNSVATEVVFSKMNDNEIRKYIETKEPLDKAGAYGIQGIGGIFVEEIRGCYYNVVGLPLNKLKTMLEEAI</sequence>
<name>NTPPA_CLOBA</name>
<reference key="1">
    <citation type="submission" date="2008-05" db="EMBL/GenBank/DDBJ databases">
        <title>Complete genome sequence of Clostridium botulinum E3 str. Alaska E43.</title>
        <authorList>
            <person name="Brinkac L.M."/>
            <person name="Brown J.L."/>
            <person name="Bruce D."/>
            <person name="Detter C."/>
            <person name="Munk C."/>
            <person name="Smith L.A."/>
            <person name="Smith T.J."/>
            <person name="Sutton G."/>
            <person name="Brettin T.S."/>
        </authorList>
    </citation>
    <scope>NUCLEOTIDE SEQUENCE [LARGE SCALE GENOMIC DNA]</scope>
    <source>
        <strain>Alaska E43 / Type E3</strain>
    </source>
</reference>
<comment type="function">
    <text evidence="1">Nucleoside triphosphate pyrophosphatase that hydrolyzes dTTP and UTP. May have a dual role in cell division arrest and in preventing the incorporation of modified nucleotides into cellular nucleic acids.</text>
</comment>
<comment type="catalytic activity">
    <reaction evidence="1">
        <text>dTTP + H2O = dTMP + diphosphate + H(+)</text>
        <dbReference type="Rhea" id="RHEA:28534"/>
        <dbReference type="ChEBI" id="CHEBI:15377"/>
        <dbReference type="ChEBI" id="CHEBI:15378"/>
        <dbReference type="ChEBI" id="CHEBI:33019"/>
        <dbReference type="ChEBI" id="CHEBI:37568"/>
        <dbReference type="ChEBI" id="CHEBI:63528"/>
        <dbReference type="EC" id="3.6.1.9"/>
    </reaction>
</comment>
<comment type="catalytic activity">
    <reaction evidence="1">
        <text>UTP + H2O = UMP + diphosphate + H(+)</text>
        <dbReference type="Rhea" id="RHEA:29395"/>
        <dbReference type="ChEBI" id="CHEBI:15377"/>
        <dbReference type="ChEBI" id="CHEBI:15378"/>
        <dbReference type="ChEBI" id="CHEBI:33019"/>
        <dbReference type="ChEBI" id="CHEBI:46398"/>
        <dbReference type="ChEBI" id="CHEBI:57865"/>
        <dbReference type="EC" id="3.6.1.9"/>
    </reaction>
</comment>
<comment type="cofactor">
    <cofactor evidence="1">
        <name>a divalent metal cation</name>
        <dbReference type="ChEBI" id="CHEBI:60240"/>
    </cofactor>
</comment>
<comment type="subcellular location">
    <subcellularLocation>
        <location evidence="1">Cytoplasm</location>
    </subcellularLocation>
</comment>
<comment type="similarity">
    <text evidence="1">Belongs to the Maf family. YhdE subfamily.</text>
</comment>
<gene>
    <name type="ordered locus">CLH_0546</name>
</gene>
<feature type="chain" id="PRO_1000127778" description="dTTP/UTP pyrophosphatase">
    <location>
        <begin position="1"/>
        <end position="188"/>
    </location>
</feature>
<feature type="active site" description="Proton acceptor" evidence="1">
    <location>
        <position position="70"/>
    </location>
</feature>
<feature type="site" description="Important for substrate specificity" evidence="1">
    <location>
        <position position="11"/>
    </location>
</feature>
<feature type="site" description="Important for substrate specificity" evidence="1">
    <location>
        <position position="71"/>
    </location>
</feature>
<feature type="site" description="Important for substrate specificity" evidence="1">
    <location>
        <position position="155"/>
    </location>
</feature>
<dbReference type="EC" id="3.6.1.9" evidence="1"/>
<dbReference type="EMBL" id="CP001078">
    <property type="protein sequence ID" value="ACD53479.1"/>
    <property type="molecule type" value="Genomic_DNA"/>
</dbReference>
<dbReference type="RefSeq" id="WP_012451373.1">
    <property type="nucleotide sequence ID" value="NC_010723.1"/>
</dbReference>
<dbReference type="SMR" id="B2V089"/>
<dbReference type="KEGG" id="cbt:CLH_0546"/>
<dbReference type="HOGENOM" id="CLU_040416_0_0_9"/>
<dbReference type="GO" id="GO:0005737">
    <property type="term" value="C:cytoplasm"/>
    <property type="evidence" value="ECO:0007669"/>
    <property type="project" value="UniProtKB-SubCell"/>
</dbReference>
<dbReference type="GO" id="GO:0036218">
    <property type="term" value="F:dTTP diphosphatase activity"/>
    <property type="evidence" value="ECO:0007669"/>
    <property type="project" value="RHEA"/>
</dbReference>
<dbReference type="GO" id="GO:0036221">
    <property type="term" value="F:UTP diphosphatase activity"/>
    <property type="evidence" value="ECO:0007669"/>
    <property type="project" value="RHEA"/>
</dbReference>
<dbReference type="GO" id="GO:0009117">
    <property type="term" value="P:nucleotide metabolic process"/>
    <property type="evidence" value="ECO:0007669"/>
    <property type="project" value="UniProtKB-KW"/>
</dbReference>
<dbReference type="CDD" id="cd00555">
    <property type="entry name" value="Maf"/>
    <property type="match status" value="1"/>
</dbReference>
<dbReference type="Gene3D" id="3.90.950.10">
    <property type="match status" value="1"/>
</dbReference>
<dbReference type="HAMAP" id="MF_00528">
    <property type="entry name" value="Maf"/>
    <property type="match status" value="1"/>
</dbReference>
<dbReference type="InterPro" id="IPR029001">
    <property type="entry name" value="ITPase-like_fam"/>
</dbReference>
<dbReference type="InterPro" id="IPR003697">
    <property type="entry name" value="Maf-like"/>
</dbReference>
<dbReference type="NCBIfam" id="TIGR00172">
    <property type="entry name" value="maf"/>
    <property type="match status" value="1"/>
</dbReference>
<dbReference type="NCBIfam" id="NF000867">
    <property type="entry name" value="PRK00078.1"/>
    <property type="match status" value="1"/>
</dbReference>
<dbReference type="PANTHER" id="PTHR43213">
    <property type="entry name" value="BIFUNCTIONAL DTTP/UTP PYROPHOSPHATASE/METHYLTRANSFERASE PROTEIN-RELATED"/>
    <property type="match status" value="1"/>
</dbReference>
<dbReference type="PANTHER" id="PTHR43213:SF5">
    <property type="entry name" value="BIFUNCTIONAL DTTP_UTP PYROPHOSPHATASE_METHYLTRANSFERASE PROTEIN-RELATED"/>
    <property type="match status" value="1"/>
</dbReference>
<dbReference type="Pfam" id="PF02545">
    <property type="entry name" value="Maf"/>
    <property type="match status" value="1"/>
</dbReference>
<dbReference type="PIRSF" id="PIRSF006305">
    <property type="entry name" value="Maf"/>
    <property type="match status" value="1"/>
</dbReference>
<dbReference type="SUPFAM" id="SSF52972">
    <property type="entry name" value="ITPase-like"/>
    <property type="match status" value="1"/>
</dbReference>
<accession>B2V089</accession>
<proteinExistence type="inferred from homology"/>